<comment type="function">
    <text evidence="1">Usually encoded in the trnK tRNA gene intron. Probably assists in splicing its own and other chloroplast group II introns.</text>
</comment>
<comment type="subcellular location">
    <subcellularLocation>
        <location>Plastid</location>
        <location>Chloroplast</location>
    </subcellularLocation>
</comment>
<comment type="similarity">
    <text evidence="1">Belongs to the intron maturase 2 family. MatK subfamily.</text>
</comment>
<protein>
    <recommendedName>
        <fullName evidence="1">Maturase K</fullName>
    </recommendedName>
    <alternativeName>
        <fullName evidence="1">Intron maturase</fullName>
    </alternativeName>
</protein>
<reference key="1">
    <citation type="book" date="2003" name="Advances in legume systematics - part 10">
        <title>Phylogenetic analyses of tribes Trifolieae and Vicieae based on sequences of the plastid gene matK (Papilionoideae: Leguminosae).</title>
        <editorList>
            <person name="Klitgaard B.B."/>
            <person name="Bruneau A."/>
        </editorList>
        <authorList>
            <person name="Steele K.P."/>
            <person name="Wojciechowski M.F."/>
        </authorList>
    </citation>
    <scope>NUCLEOTIDE SEQUENCE [GENOMIC DNA]</scope>
</reference>
<accession>Q8MCR8</accession>
<sequence>MKEYQVYLERARSRQQDFLYPLLFREYIYGLAYSHNLNRSIFLENVGYDNKYSLLIVKRLITRMYQQNHLIISANDSNKNTLGGYNPILDSQIISEGFAIVVEIPFLRQLSSSLEEEKILQSYKNLRSIHSIFPFLEDKFTYLHYVSDIRIPYPIHLEILVQILRYWVKDAPFFHLLRLFLYNFCNWNSFFTTKKWISTFSKSNPRLFLFLHNFYVCEYESIFVFLRTKSSHLRLKSFSVFFERIFFYAKREHLVKVFSKDFSYTLTFLKDPNIHYVRYQGKCILASKNAPFLMNKWKHYFIHLWQCFFDLWSQPRMININPLSEHSFQLLGYFLNVRLNRSVVRSQMLQNTFLIEMVIQNLDIIVPIIPLIRSLAKAKFCNILGEPISKPVWADSSDFDIIDRFLRICRNLSHYYNGSSKKKSLYRIKYILRLSCIKTLACKHKSTVRAFLKRSGSEELLQEFFTEEQEILSFIFPRDSSTWQRLHRNRIWYLDILFSNDLVHDE</sequence>
<organism>
    <name type="scientific">Lathyrus tingitanus</name>
    <name type="common">Tangier pea</name>
    <dbReference type="NCBI Taxonomy" id="3862"/>
    <lineage>
        <taxon>Eukaryota</taxon>
        <taxon>Viridiplantae</taxon>
        <taxon>Streptophyta</taxon>
        <taxon>Embryophyta</taxon>
        <taxon>Tracheophyta</taxon>
        <taxon>Spermatophyta</taxon>
        <taxon>Magnoliopsida</taxon>
        <taxon>eudicotyledons</taxon>
        <taxon>Gunneridae</taxon>
        <taxon>Pentapetalae</taxon>
        <taxon>rosids</taxon>
        <taxon>fabids</taxon>
        <taxon>Fabales</taxon>
        <taxon>Fabaceae</taxon>
        <taxon>Papilionoideae</taxon>
        <taxon>50 kb inversion clade</taxon>
        <taxon>NPAAA clade</taxon>
        <taxon>Hologalegina</taxon>
        <taxon>IRL clade</taxon>
        <taxon>Fabeae</taxon>
        <taxon>Lathyrus</taxon>
    </lineage>
</organism>
<dbReference type="EMBL" id="AF522087">
    <property type="protein sequence ID" value="AAM82079.1"/>
    <property type="molecule type" value="Genomic_DNA"/>
</dbReference>
<dbReference type="GO" id="GO:0009507">
    <property type="term" value="C:chloroplast"/>
    <property type="evidence" value="ECO:0007669"/>
    <property type="project" value="UniProtKB-SubCell"/>
</dbReference>
<dbReference type="GO" id="GO:0003723">
    <property type="term" value="F:RNA binding"/>
    <property type="evidence" value="ECO:0007669"/>
    <property type="project" value="UniProtKB-KW"/>
</dbReference>
<dbReference type="GO" id="GO:0006397">
    <property type="term" value="P:mRNA processing"/>
    <property type="evidence" value="ECO:0007669"/>
    <property type="project" value="UniProtKB-KW"/>
</dbReference>
<dbReference type="GO" id="GO:0008380">
    <property type="term" value="P:RNA splicing"/>
    <property type="evidence" value="ECO:0007669"/>
    <property type="project" value="UniProtKB-UniRule"/>
</dbReference>
<dbReference type="GO" id="GO:0008033">
    <property type="term" value="P:tRNA processing"/>
    <property type="evidence" value="ECO:0007669"/>
    <property type="project" value="UniProtKB-KW"/>
</dbReference>
<dbReference type="HAMAP" id="MF_01390">
    <property type="entry name" value="MatK"/>
    <property type="match status" value="1"/>
</dbReference>
<dbReference type="InterPro" id="IPR024937">
    <property type="entry name" value="Domain_X"/>
</dbReference>
<dbReference type="InterPro" id="IPR002866">
    <property type="entry name" value="Maturase_MatK"/>
</dbReference>
<dbReference type="InterPro" id="IPR024942">
    <property type="entry name" value="Maturase_MatK_N"/>
</dbReference>
<dbReference type="PANTHER" id="PTHR34811">
    <property type="entry name" value="MATURASE K"/>
    <property type="match status" value="1"/>
</dbReference>
<dbReference type="PANTHER" id="PTHR34811:SF1">
    <property type="entry name" value="MATURASE K"/>
    <property type="match status" value="1"/>
</dbReference>
<dbReference type="Pfam" id="PF01348">
    <property type="entry name" value="Intron_maturas2"/>
    <property type="match status" value="1"/>
</dbReference>
<dbReference type="Pfam" id="PF01824">
    <property type="entry name" value="MatK_N"/>
    <property type="match status" value="1"/>
</dbReference>
<keyword id="KW-0150">Chloroplast</keyword>
<keyword id="KW-0507">mRNA processing</keyword>
<keyword id="KW-0934">Plastid</keyword>
<keyword id="KW-0694">RNA-binding</keyword>
<keyword id="KW-0819">tRNA processing</keyword>
<name>MATK_LATTI</name>
<feature type="chain" id="PRO_0000143460" description="Maturase K">
    <location>
        <begin position="1"/>
        <end position="506"/>
    </location>
</feature>
<evidence type="ECO:0000255" key="1">
    <source>
        <dbReference type="HAMAP-Rule" id="MF_01390"/>
    </source>
</evidence>
<geneLocation type="chloroplast"/>
<proteinExistence type="inferred from homology"/>
<gene>
    <name evidence="1" type="primary">matK</name>
</gene>